<proteinExistence type="inferred from homology"/>
<keyword id="KW-0963">Cytoplasm</keyword>
<keyword id="KW-0227">DNA damage</keyword>
<keyword id="KW-0234">DNA repair</keyword>
<keyword id="KW-0378">Hydrolase</keyword>
<keyword id="KW-1185">Reference proteome</keyword>
<feature type="chain" id="PRO_1000096563" description="Uracil-DNA glycosylase">
    <location>
        <begin position="1"/>
        <end position="215"/>
    </location>
</feature>
<feature type="active site" description="Proton acceptor" evidence="1">
    <location>
        <position position="59"/>
    </location>
</feature>
<organism>
    <name type="scientific">Aliarcobacter butzleri (strain RM4018)</name>
    <name type="common">Arcobacter butzleri</name>
    <dbReference type="NCBI Taxonomy" id="367737"/>
    <lineage>
        <taxon>Bacteria</taxon>
        <taxon>Pseudomonadati</taxon>
        <taxon>Campylobacterota</taxon>
        <taxon>Epsilonproteobacteria</taxon>
        <taxon>Campylobacterales</taxon>
        <taxon>Arcobacteraceae</taxon>
        <taxon>Aliarcobacter</taxon>
    </lineage>
</organism>
<name>UNG_ALIB4</name>
<dbReference type="EC" id="3.2.2.27" evidence="1"/>
<dbReference type="EMBL" id="CP000361">
    <property type="protein sequence ID" value="ABV68361.1"/>
    <property type="molecule type" value="Genomic_DNA"/>
</dbReference>
<dbReference type="RefSeq" id="WP_012148009.1">
    <property type="nucleotide sequence ID" value="NC_009850.1"/>
</dbReference>
<dbReference type="SMR" id="A8EWN8"/>
<dbReference type="STRING" id="367737.Abu_2147"/>
<dbReference type="GeneID" id="24304731"/>
<dbReference type="KEGG" id="abu:Abu_2147"/>
<dbReference type="eggNOG" id="COG0692">
    <property type="taxonomic scope" value="Bacteria"/>
</dbReference>
<dbReference type="HOGENOM" id="CLU_032162_3_0_7"/>
<dbReference type="Proteomes" id="UP000001136">
    <property type="component" value="Chromosome"/>
</dbReference>
<dbReference type="GO" id="GO:0005737">
    <property type="term" value="C:cytoplasm"/>
    <property type="evidence" value="ECO:0007669"/>
    <property type="project" value="UniProtKB-SubCell"/>
</dbReference>
<dbReference type="GO" id="GO:0004844">
    <property type="term" value="F:uracil DNA N-glycosylase activity"/>
    <property type="evidence" value="ECO:0007669"/>
    <property type="project" value="UniProtKB-UniRule"/>
</dbReference>
<dbReference type="GO" id="GO:0097510">
    <property type="term" value="P:base-excision repair, AP site formation via deaminated base removal"/>
    <property type="evidence" value="ECO:0007669"/>
    <property type="project" value="TreeGrafter"/>
</dbReference>
<dbReference type="CDD" id="cd10027">
    <property type="entry name" value="UDG-F1-like"/>
    <property type="match status" value="1"/>
</dbReference>
<dbReference type="FunFam" id="3.40.470.10:FF:000001">
    <property type="entry name" value="Uracil-DNA glycosylase"/>
    <property type="match status" value="1"/>
</dbReference>
<dbReference type="Gene3D" id="3.40.470.10">
    <property type="entry name" value="Uracil-DNA glycosylase-like domain"/>
    <property type="match status" value="1"/>
</dbReference>
<dbReference type="HAMAP" id="MF_00148">
    <property type="entry name" value="UDG"/>
    <property type="match status" value="1"/>
</dbReference>
<dbReference type="InterPro" id="IPR002043">
    <property type="entry name" value="UDG_fam1"/>
</dbReference>
<dbReference type="InterPro" id="IPR018085">
    <property type="entry name" value="Ura-DNA_Glyclase_AS"/>
</dbReference>
<dbReference type="InterPro" id="IPR005122">
    <property type="entry name" value="Uracil-DNA_glycosylase-like"/>
</dbReference>
<dbReference type="InterPro" id="IPR036895">
    <property type="entry name" value="Uracil-DNA_glycosylase-like_sf"/>
</dbReference>
<dbReference type="NCBIfam" id="NF003588">
    <property type="entry name" value="PRK05254.1-1"/>
    <property type="match status" value="1"/>
</dbReference>
<dbReference type="NCBIfam" id="NF003589">
    <property type="entry name" value="PRK05254.1-2"/>
    <property type="match status" value="1"/>
</dbReference>
<dbReference type="NCBIfam" id="NF003591">
    <property type="entry name" value="PRK05254.1-4"/>
    <property type="match status" value="1"/>
</dbReference>
<dbReference type="NCBIfam" id="NF003592">
    <property type="entry name" value="PRK05254.1-5"/>
    <property type="match status" value="1"/>
</dbReference>
<dbReference type="NCBIfam" id="TIGR00628">
    <property type="entry name" value="ung"/>
    <property type="match status" value="1"/>
</dbReference>
<dbReference type="PANTHER" id="PTHR11264">
    <property type="entry name" value="URACIL-DNA GLYCOSYLASE"/>
    <property type="match status" value="1"/>
</dbReference>
<dbReference type="PANTHER" id="PTHR11264:SF0">
    <property type="entry name" value="URACIL-DNA GLYCOSYLASE"/>
    <property type="match status" value="1"/>
</dbReference>
<dbReference type="Pfam" id="PF03167">
    <property type="entry name" value="UDG"/>
    <property type="match status" value="1"/>
</dbReference>
<dbReference type="SMART" id="SM00986">
    <property type="entry name" value="UDG"/>
    <property type="match status" value="1"/>
</dbReference>
<dbReference type="SMART" id="SM00987">
    <property type="entry name" value="UreE_C"/>
    <property type="match status" value="1"/>
</dbReference>
<dbReference type="SUPFAM" id="SSF52141">
    <property type="entry name" value="Uracil-DNA glycosylase-like"/>
    <property type="match status" value="1"/>
</dbReference>
<dbReference type="PROSITE" id="PS00130">
    <property type="entry name" value="U_DNA_GLYCOSYLASE"/>
    <property type="match status" value="1"/>
</dbReference>
<reference key="1">
    <citation type="journal article" date="2007" name="PLoS ONE">
        <title>The complete genome sequence and analysis of the Epsilonproteobacterium Arcobacter butzleri.</title>
        <authorList>
            <person name="Miller W.G."/>
            <person name="Parker C.T."/>
            <person name="Rubenfield M."/>
            <person name="Mendz G.L."/>
            <person name="Woesten M.M.S.M."/>
            <person name="Ussery D.W."/>
            <person name="Stolz J.F."/>
            <person name="Binnewies T.T."/>
            <person name="Hallin P.F."/>
            <person name="Wang G."/>
            <person name="Malek J.A."/>
            <person name="Rogosin A."/>
            <person name="Stanker L.H."/>
            <person name="Mandrell R.E."/>
        </authorList>
    </citation>
    <scope>NUCLEOTIDE SEQUENCE [LARGE SCALE GENOMIC DNA]</scope>
    <source>
        <strain>RM4018</strain>
    </source>
</reference>
<sequence>MTWKDIIENEQQKPYYGKLKEEIDKRYENSIVFPEKQNIFKAFSLTKFEDLKVVILGQDPYHGIGQAQGLSFSTPSNIKNPPSMVNILKEINDDLGKKSVCEDGDLTPWAKQGIMLLNTILTVEQGLAKSHHNLGWEIFTDNIIKYISDNKENVIFLLWGSPAISKTKLIDKNKHFILTAPHPSPLSVYRGFYGCKHFSKTNEILKKLNKEEIIW</sequence>
<evidence type="ECO:0000255" key="1">
    <source>
        <dbReference type="HAMAP-Rule" id="MF_00148"/>
    </source>
</evidence>
<gene>
    <name evidence="1" type="primary">ung</name>
    <name type="ordered locus">Abu_2147</name>
</gene>
<protein>
    <recommendedName>
        <fullName evidence="1">Uracil-DNA glycosylase</fullName>
        <shortName evidence="1">UDG</shortName>
        <ecNumber evidence="1">3.2.2.27</ecNumber>
    </recommendedName>
</protein>
<accession>A8EWN8</accession>
<comment type="function">
    <text evidence="1">Excises uracil residues from the DNA which can arise as a result of misincorporation of dUMP residues by DNA polymerase or due to deamination of cytosine.</text>
</comment>
<comment type="catalytic activity">
    <reaction evidence="1">
        <text>Hydrolyzes single-stranded DNA or mismatched double-stranded DNA and polynucleotides, releasing free uracil.</text>
        <dbReference type="EC" id="3.2.2.27"/>
    </reaction>
</comment>
<comment type="subcellular location">
    <subcellularLocation>
        <location evidence="1">Cytoplasm</location>
    </subcellularLocation>
</comment>
<comment type="similarity">
    <text evidence="1">Belongs to the uracil-DNA glycosylase (UDG) superfamily. UNG family.</text>
</comment>